<gene>
    <name evidence="1" type="primary">ndk</name>
    <name type="ordered locus">ETA_10240</name>
</gene>
<dbReference type="EC" id="2.7.4.6" evidence="1"/>
<dbReference type="EMBL" id="CU468135">
    <property type="protein sequence ID" value="CAO96070.1"/>
    <property type="molecule type" value="Genomic_DNA"/>
</dbReference>
<dbReference type="RefSeq" id="WP_012440770.1">
    <property type="nucleotide sequence ID" value="NC_010694.1"/>
</dbReference>
<dbReference type="SMR" id="B2VE97"/>
<dbReference type="STRING" id="465817.ETA_10240"/>
<dbReference type="KEGG" id="eta:ETA_10240"/>
<dbReference type="eggNOG" id="COG0105">
    <property type="taxonomic scope" value="Bacteria"/>
</dbReference>
<dbReference type="HOGENOM" id="CLU_060216_8_1_6"/>
<dbReference type="OrthoDB" id="9801161at2"/>
<dbReference type="Proteomes" id="UP000001726">
    <property type="component" value="Chromosome"/>
</dbReference>
<dbReference type="GO" id="GO:0005737">
    <property type="term" value="C:cytoplasm"/>
    <property type="evidence" value="ECO:0007669"/>
    <property type="project" value="UniProtKB-SubCell"/>
</dbReference>
<dbReference type="GO" id="GO:0005524">
    <property type="term" value="F:ATP binding"/>
    <property type="evidence" value="ECO:0007669"/>
    <property type="project" value="UniProtKB-UniRule"/>
</dbReference>
<dbReference type="GO" id="GO:0046872">
    <property type="term" value="F:metal ion binding"/>
    <property type="evidence" value="ECO:0007669"/>
    <property type="project" value="UniProtKB-KW"/>
</dbReference>
<dbReference type="GO" id="GO:0004550">
    <property type="term" value="F:nucleoside diphosphate kinase activity"/>
    <property type="evidence" value="ECO:0007669"/>
    <property type="project" value="UniProtKB-UniRule"/>
</dbReference>
<dbReference type="GO" id="GO:0006241">
    <property type="term" value="P:CTP biosynthetic process"/>
    <property type="evidence" value="ECO:0007669"/>
    <property type="project" value="UniProtKB-UniRule"/>
</dbReference>
<dbReference type="GO" id="GO:0006183">
    <property type="term" value="P:GTP biosynthetic process"/>
    <property type="evidence" value="ECO:0007669"/>
    <property type="project" value="UniProtKB-UniRule"/>
</dbReference>
<dbReference type="GO" id="GO:0006228">
    <property type="term" value="P:UTP biosynthetic process"/>
    <property type="evidence" value="ECO:0007669"/>
    <property type="project" value="UniProtKB-UniRule"/>
</dbReference>
<dbReference type="CDD" id="cd04413">
    <property type="entry name" value="NDPk_I"/>
    <property type="match status" value="1"/>
</dbReference>
<dbReference type="FunFam" id="3.30.70.141:FF:000001">
    <property type="entry name" value="Nucleoside diphosphate kinase"/>
    <property type="match status" value="1"/>
</dbReference>
<dbReference type="Gene3D" id="3.30.70.141">
    <property type="entry name" value="Nucleoside diphosphate kinase-like domain"/>
    <property type="match status" value="1"/>
</dbReference>
<dbReference type="HAMAP" id="MF_00451">
    <property type="entry name" value="NDP_kinase"/>
    <property type="match status" value="1"/>
</dbReference>
<dbReference type="InterPro" id="IPR034907">
    <property type="entry name" value="NDK-like_dom"/>
</dbReference>
<dbReference type="InterPro" id="IPR036850">
    <property type="entry name" value="NDK-like_dom_sf"/>
</dbReference>
<dbReference type="InterPro" id="IPR001564">
    <property type="entry name" value="Nucleoside_diP_kinase"/>
</dbReference>
<dbReference type="NCBIfam" id="NF001908">
    <property type="entry name" value="PRK00668.1"/>
    <property type="match status" value="1"/>
</dbReference>
<dbReference type="PANTHER" id="PTHR46161">
    <property type="entry name" value="NUCLEOSIDE DIPHOSPHATE KINASE"/>
    <property type="match status" value="1"/>
</dbReference>
<dbReference type="PANTHER" id="PTHR46161:SF3">
    <property type="entry name" value="NUCLEOSIDE DIPHOSPHATE KINASE DDB_G0292928-RELATED"/>
    <property type="match status" value="1"/>
</dbReference>
<dbReference type="Pfam" id="PF00334">
    <property type="entry name" value="NDK"/>
    <property type="match status" value="1"/>
</dbReference>
<dbReference type="PRINTS" id="PR01243">
    <property type="entry name" value="NUCDPKINASE"/>
</dbReference>
<dbReference type="SMART" id="SM00562">
    <property type="entry name" value="NDK"/>
    <property type="match status" value="1"/>
</dbReference>
<dbReference type="SUPFAM" id="SSF54919">
    <property type="entry name" value="Nucleoside diphosphate kinase, NDK"/>
    <property type="match status" value="1"/>
</dbReference>
<dbReference type="PROSITE" id="PS51374">
    <property type="entry name" value="NDPK_LIKE"/>
    <property type="match status" value="1"/>
</dbReference>
<proteinExistence type="inferred from homology"/>
<organism>
    <name type="scientific">Erwinia tasmaniensis (strain DSM 17950 / CFBP 7177 / CIP 109463 / NCPPB 4357 / Et1/99)</name>
    <dbReference type="NCBI Taxonomy" id="465817"/>
    <lineage>
        <taxon>Bacteria</taxon>
        <taxon>Pseudomonadati</taxon>
        <taxon>Pseudomonadota</taxon>
        <taxon>Gammaproteobacteria</taxon>
        <taxon>Enterobacterales</taxon>
        <taxon>Erwiniaceae</taxon>
        <taxon>Erwinia</taxon>
    </lineage>
</organism>
<keyword id="KW-0067">ATP-binding</keyword>
<keyword id="KW-0963">Cytoplasm</keyword>
<keyword id="KW-0418">Kinase</keyword>
<keyword id="KW-0460">Magnesium</keyword>
<keyword id="KW-0479">Metal-binding</keyword>
<keyword id="KW-0546">Nucleotide metabolism</keyword>
<keyword id="KW-0547">Nucleotide-binding</keyword>
<keyword id="KW-0597">Phosphoprotein</keyword>
<keyword id="KW-1185">Reference proteome</keyword>
<keyword id="KW-0808">Transferase</keyword>
<sequence>MTIERTFSIVKPNAVAKNVIGAIFSRFESAGFKIVGSKMLHLSKEQAEGFYAEHQGKPFFDGLVEFMTSGPVVVSVLEGDNAVQRHRDLMGATNPANALAGTLRADYADSFTENATHGSDSAESAAREIAYFFGEGEICPRTR</sequence>
<evidence type="ECO:0000255" key="1">
    <source>
        <dbReference type="HAMAP-Rule" id="MF_00451"/>
    </source>
</evidence>
<accession>B2VE97</accession>
<comment type="function">
    <text evidence="1">Major role in the synthesis of nucleoside triphosphates other than ATP. The ATP gamma phosphate is transferred to the NDP beta phosphate via a ping-pong mechanism, using a phosphorylated active-site intermediate.</text>
</comment>
<comment type="catalytic activity">
    <reaction evidence="1">
        <text>a 2'-deoxyribonucleoside 5'-diphosphate + ATP = a 2'-deoxyribonucleoside 5'-triphosphate + ADP</text>
        <dbReference type="Rhea" id="RHEA:44640"/>
        <dbReference type="ChEBI" id="CHEBI:30616"/>
        <dbReference type="ChEBI" id="CHEBI:61560"/>
        <dbReference type="ChEBI" id="CHEBI:73316"/>
        <dbReference type="ChEBI" id="CHEBI:456216"/>
        <dbReference type="EC" id="2.7.4.6"/>
    </reaction>
</comment>
<comment type="catalytic activity">
    <reaction evidence="1">
        <text>a ribonucleoside 5'-diphosphate + ATP = a ribonucleoside 5'-triphosphate + ADP</text>
        <dbReference type="Rhea" id="RHEA:18113"/>
        <dbReference type="ChEBI" id="CHEBI:30616"/>
        <dbReference type="ChEBI" id="CHEBI:57930"/>
        <dbReference type="ChEBI" id="CHEBI:61557"/>
        <dbReference type="ChEBI" id="CHEBI:456216"/>
        <dbReference type="EC" id="2.7.4.6"/>
    </reaction>
</comment>
<comment type="cofactor">
    <cofactor evidence="1">
        <name>Mg(2+)</name>
        <dbReference type="ChEBI" id="CHEBI:18420"/>
    </cofactor>
</comment>
<comment type="subunit">
    <text evidence="1">Homotetramer.</text>
</comment>
<comment type="subcellular location">
    <subcellularLocation>
        <location evidence="1">Cytoplasm</location>
    </subcellularLocation>
</comment>
<comment type="similarity">
    <text evidence="1">Belongs to the NDK family.</text>
</comment>
<name>NDK_ERWT9</name>
<protein>
    <recommendedName>
        <fullName evidence="1">Nucleoside diphosphate kinase</fullName>
        <shortName evidence="1">NDK</shortName>
        <shortName evidence="1">NDP kinase</shortName>
        <ecNumber evidence="1">2.7.4.6</ecNumber>
    </recommendedName>
    <alternativeName>
        <fullName evidence="1">Nucleoside-2-P kinase</fullName>
    </alternativeName>
</protein>
<feature type="chain" id="PRO_1000124964" description="Nucleoside diphosphate kinase">
    <location>
        <begin position="1"/>
        <end position="143"/>
    </location>
</feature>
<feature type="active site" description="Pros-phosphohistidine intermediate" evidence="1">
    <location>
        <position position="117"/>
    </location>
</feature>
<feature type="binding site" evidence="1">
    <location>
        <position position="11"/>
    </location>
    <ligand>
        <name>ATP</name>
        <dbReference type="ChEBI" id="CHEBI:30616"/>
    </ligand>
</feature>
<feature type="binding site" evidence="1">
    <location>
        <position position="59"/>
    </location>
    <ligand>
        <name>ATP</name>
        <dbReference type="ChEBI" id="CHEBI:30616"/>
    </ligand>
</feature>
<feature type="binding site" evidence="1">
    <location>
        <position position="87"/>
    </location>
    <ligand>
        <name>ATP</name>
        <dbReference type="ChEBI" id="CHEBI:30616"/>
    </ligand>
</feature>
<feature type="binding site" evidence="1">
    <location>
        <position position="93"/>
    </location>
    <ligand>
        <name>ATP</name>
        <dbReference type="ChEBI" id="CHEBI:30616"/>
    </ligand>
</feature>
<feature type="binding site" evidence="1">
    <location>
        <position position="104"/>
    </location>
    <ligand>
        <name>ATP</name>
        <dbReference type="ChEBI" id="CHEBI:30616"/>
    </ligand>
</feature>
<feature type="binding site" evidence="1">
    <location>
        <position position="114"/>
    </location>
    <ligand>
        <name>ATP</name>
        <dbReference type="ChEBI" id="CHEBI:30616"/>
    </ligand>
</feature>
<reference key="1">
    <citation type="journal article" date="2008" name="Environ. Microbiol.">
        <title>The genome of Erwinia tasmaniensis strain Et1/99, a non-pathogenic bacterium in the genus Erwinia.</title>
        <authorList>
            <person name="Kube M."/>
            <person name="Migdoll A.M."/>
            <person name="Mueller I."/>
            <person name="Kuhl H."/>
            <person name="Beck A."/>
            <person name="Reinhardt R."/>
            <person name="Geider K."/>
        </authorList>
    </citation>
    <scope>NUCLEOTIDE SEQUENCE [LARGE SCALE GENOMIC DNA]</scope>
    <source>
        <strain>DSM 17950 / CFBP 7177 / CIP 109463 / NCPPB 4357 / Et1/99</strain>
    </source>
</reference>